<name>HMUV_PHODP</name>
<organism>
    <name type="scientific">Photobacterium damsela subsp. piscicida</name>
    <name type="common">Pasteurella piscicida</name>
    <dbReference type="NCBI Taxonomy" id="38294"/>
    <lineage>
        <taxon>Bacteria</taxon>
        <taxon>Pseudomonadati</taxon>
        <taxon>Pseudomonadota</taxon>
        <taxon>Gammaproteobacteria</taxon>
        <taxon>Vibrionales</taxon>
        <taxon>Vibrionaceae</taxon>
        <taxon>Photobacterium</taxon>
    </lineage>
</organism>
<dbReference type="EC" id="7.6.2.-" evidence="1"/>
<dbReference type="EMBL" id="AJ582082">
    <property type="protein sequence ID" value="CAE46555.1"/>
    <property type="molecule type" value="Genomic_DNA"/>
</dbReference>
<dbReference type="RefSeq" id="WP_044175776.1">
    <property type="nucleotide sequence ID" value="NZ_SUMH01000038.1"/>
</dbReference>
<dbReference type="SMR" id="Q70GD4"/>
<dbReference type="GO" id="GO:0005886">
    <property type="term" value="C:plasma membrane"/>
    <property type="evidence" value="ECO:0007669"/>
    <property type="project" value="UniProtKB-SubCell"/>
</dbReference>
<dbReference type="GO" id="GO:0005524">
    <property type="term" value="F:ATP binding"/>
    <property type="evidence" value="ECO:0007669"/>
    <property type="project" value="UniProtKB-KW"/>
</dbReference>
<dbReference type="GO" id="GO:0016887">
    <property type="term" value="F:ATP hydrolysis activity"/>
    <property type="evidence" value="ECO:0007669"/>
    <property type="project" value="InterPro"/>
</dbReference>
<dbReference type="CDD" id="cd03214">
    <property type="entry name" value="ABC_Iron-Siderophores_B12_Hemin"/>
    <property type="match status" value="1"/>
</dbReference>
<dbReference type="FunFam" id="3.40.50.300:FF:000134">
    <property type="entry name" value="Iron-enterobactin ABC transporter ATP-binding protein"/>
    <property type="match status" value="1"/>
</dbReference>
<dbReference type="Gene3D" id="3.40.50.300">
    <property type="entry name" value="P-loop containing nucleotide triphosphate hydrolases"/>
    <property type="match status" value="1"/>
</dbReference>
<dbReference type="InterPro" id="IPR003593">
    <property type="entry name" value="AAA+_ATPase"/>
</dbReference>
<dbReference type="InterPro" id="IPR003439">
    <property type="entry name" value="ABC_transporter-like_ATP-bd"/>
</dbReference>
<dbReference type="InterPro" id="IPR027417">
    <property type="entry name" value="P-loop_NTPase"/>
</dbReference>
<dbReference type="NCBIfam" id="NF010068">
    <property type="entry name" value="PRK13548.1"/>
    <property type="match status" value="1"/>
</dbReference>
<dbReference type="PANTHER" id="PTHR42794">
    <property type="entry name" value="HEMIN IMPORT ATP-BINDING PROTEIN HMUV"/>
    <property type="match status" value="1"/>
</dbReference>
<dbReference type="PANTHER" id="PTHR42794:SF1">
    <property type="entry name" value="HEMIN IMPORT ATP-BINDING PROTEIN HMUV"/>
    <property type="match status" value="1"/>
</dbReference>
<dbReference type="Pfam" id="PF00005">
    <property type="entry name" value="ABC_tran"/>
    <property type="match status" value="1"/>
</dbReference>
<dbReference type="SMART" id="SM00382">
    <property type="entry name" value="AAA"/>
    <property type="match status" value="1"/>
</dbReference>
<dbReference type="SUPFAM" id="SSF52540">
    <property type="entry name" value="P-loop containing nucleoside triphosphate hydrolases"/>
    <property type="match status" value="1"/>
</dbReference>
<dbReference type="PROSITE" id="PS50893">
    <property type="entry name" value="ABC_TRANSPORTER_2"/>
    <property type="match status" value="1"/>
</dbReference>
<dbReference type="PROSITE" id="PS51261">
    <property type="entry name" value="HMUV"/>
    <property type="match status" value="1"/>
</dbReference>
<comment type="function">
    <text evidence="1">Part of the ABC transporter complex HmuTUV involved in hemin import. Responsible for energy coupling to the transport system.</text>
</comment>
<comment type="subunit">
    <text evidence="1">The complex is composed of two ATP-binding proteins (HmuV), two transmembrane proteins (HmuU) and a solute-binding protein (HmuT).</text>
</comment>
<comment type="subcellular location">
    <subcellularLocation>
        <location evidence="1">Cell inner membrane</location>
        <topology evidence="1">Peripheral membrane protein</topology>
    </subcellularLocation>
</comment>
<comment type="similarity">
    <text evidence="1">Belongs to the ABC transporter superfamily. Heme (hemin) importer (TC 3.A.1.14.5) family.</text>
</comment>
<sequence length="265" mass="28569">MSSTLSSHNVIALKASNLHLQLGGKTLLDNVDLEIRSGQITALLGPNGAGKSSLLKVLNGEITPNSGSIEIFSSPKDHWPSELLAKHMGILPQHSTLSFSFLAHEVAELGAMPLAISNHQAQQLAAKNMVKVGVDHLANRLYPTLSGGEKQRVHFARVLTQLSHSGEQCILMLDEPTSALDLAHQHHTLEIAQALSQQGAAVIIVIHDLNLAAQYADRLIILNQGKIQADGTPWQVLTPTAVENVYGWPVQVIAHPEHNYPVILA</sequence>
<proteinExistence type="inferred from homology"/>
<reference key="1">
    <citation type="journal article" date="2005" name="Arch. Microbiol.">
        <title>Heme uptake genes in human and fish isolates of Photobacterium damselae: existence of hutA pseudogenes.</title>
        <authorList>
            <person name="Juiz-Rio S."/>
            <person name="Osorio C.R."/>
            <person name="Lemos M.L."/>
        </authorList>
    </citation>
    <scope>NUCLEOTIDE SEQUENCE [GENOMIC DNA]</scope>
    <source>
        <strain>DI21</strain>
    </source>
</reference>
<keyword id="KW-0067">ATP-binding</keyword>
<keyword id="KW-0997">Cell inner membrane</keyword>
<keyword id="KW-1003">Cell membrane</keyword>
<keyword id="KW-0472">Membrane</keyword>
<keyword id="KW-0547">Nucleotide-binding</keyword>
<keyword id="KW-1278">Translocase</keyword>
<keyword id="KW-0813">Transport</keyword>
<protein>
    <recommendedName>
        <fullName evidence="1">Hemin import ATP-binding protein HmuV</fullName>
        <ecNumber evidence="1">7.6.2.-</ecNumber>
    </recommendedName>
</protein>
<accession>Q70GD4</accession>
<gene>
    <name evidence="1" type="primary">hmuV</name>
    <name type="synonym">hutD</name>
</gene>
<feature type="chain" id="PRO_0000269605" description="Hemin import ATP-binding protein HmuV">
    <location>
        <begin position="1"/>
        <end position="265"/>
    </location>
</feature>
<feature type="domain" description="ABC transporter" evidence="1">
    <location>
        <begin position="13"/>
        <end position="249"/>
    </location>
</feature>
<feature type="binding site" evidence="1">
    <location>
        <begin position="45"/>
        <end position="52"/>
    </location>
    <ligand>
        <name>ATP</name>
        <dbReference type="ChEBI" id="CHEBI:30616"/>
    </ligand>
</feature>
<evidence type="ECO:0000255" key="1">
    <source>
        <dbReference type="HAMAP-Rule" id="MF_01718"/>
    </source>
</evidence>